<proteinExistence type="inferred from homology"/>
<name>MURG_XANE5</name>
<feature type="chain" id="PRO_0000225114" description="UDP-N-acetylglucosamine--N-acetylmuramyl-(pentapeptide) pyrophosphoryl-undecaprenol N-acetylglucosamine transferase">
    <location>
        <begin position="1"/>
        <end position="431"/>
    </location>
</feature>
<feature type="region of interest" description="Disordered" evidence="2">
    <location>
        <begin position="370"/>
        <end position="431"/>
    </location>
</feature>
<feature type="compositionally biased region" description="Polar residues" evidence="2">
    <location>
        <begin position="395"/>
        <end position="420"/>
    </location>
</feature>
<feature type="binding site" evidence="1">
    <location>
        <begin position="29"/>
        <end position="31"/>
    </location>
    <ligand>
        <name>UDP-N-acetyl-alpha-D-glucosamine</name>
        <dbReference type="ChEBI" id="CHEBI:57705"/>
    </ligand>
</feature>
<feature type="binding site" evidence="1">
    <location>
        <position position="141"/>
    </location>
    <ligand>
        <name>UDP-N-acetyl-alpha-D-glucosamine</name>
        <dbReference type="ChEBI" id="CHEBI:57705"/>
    </ligand>
</feature>
<feature type="binding site" evidence="1">
    <location>
        <position position="177"/>
    </location>
    <ligand>
        <name>UDP-N-acetyl-alpha-D-glucosamine</name>
        <dbReference type="ChEBI" id="CHEBI:57705"/>
    </ligand>
</feature>
<feature type="binding site" evidence="1">
    <location>
        <position position="205"/>
    </location>
    <ligand>
        <name>UDP-N-acetyl-alpha-D-glucosamine</name>
        <dbReference type="ChEBI" id="CHEBI:57705"/>
    </ligand>
</feature>
<feature type="binding site" evidence="1">
    <location>
        <position position="258"/>
    </location>
    <ligand>
        <name>UDP-N-acetyl-alpha-D-glucosamine</name>
        <dbReference type="ChEBI" id="CHEBI:57705"/>
    </ligand>
</feature>
<feature type="binding site" evidence="1">
    <location>
        <position position="303"/>
    </location>
    <ligand>
        <name>UDP-N-acetyl-alpha-D-glucosamine</name>
        <dbReference type="ChEBI" id="CHEBI:57705"/>
    </ligand>
</feature>
<keyword id="KW-0131">Cell cycle</keyword>
<keyword id="KW-0132">Cell division</keyword>
<keyword id="KW-0997">Cell inner membrane</keyword>
<keyword id="KW-1003">Cell membrane</keyword>
<keyword id="KW-0133">Cell shape</keyword>
<keyword id="KW-0961">Cell wall biogenesis/degradation</keyword>
<keyword id="KW-0328">Glycosyltransferase</keyword>
<keyword id="KW-0472">Membrane</keyword>
<keyword id="KW-0573">Peptidoglycan synthesis</keyword>
<keyword id="KW-0808">Transferase</keyword>
<dbReference type="EC" id="2.4.1.227" evidence="1"/>
<dbReference type="EMBL" id="AM039952">
    <property type="protein sequence ID" value="CAJ22461.1"/>
    <property type="molecule type" value="Genomic_DNA"/>
</dbReference>
<dbReference type="RefSeq" id="WP_011346424.1">
    <property type="nucleotide sequence ID" value="NZ_CP017190.1"/>
</dbReference>
<dbReference type="SMR" id="Q3BXF2"/>
<dbReference type="STRING" id="456327.BJD11_18645"/>
<dbReference type="CAZy" id="GT28">
    <property type="family name" value="Glycosyltransferase Family 28"/>
</dbReference>
<dbReference type="KEGG" id="xcv:XCV0830"/>
<dbReference type="eggNOG" id="COG0707">
    <property type="taxonomic scope" value="Bacteria"/>
</dbReference>
<dbReference type="HOGENOM" id="CLU_037404_2_0_6"/>
<dbReference type="UniPathway" id="UPA00219"/>
<dbReference type="Proteomes" id="UP000007069">
    <property type="component" value="Chromosome"/>
</dbReference>
<dbReference type="GO" id="GO:0005886">
    <property type="term" value="C:plasma membrane"/>
    <property type="evidence" value="ECO:0007669"/>
    <property type="project" value="UniProtKB-SubCell"/>
</dbReference>
<dbReference type="GO" id="GO:0051991">
    <property type="term" value="F:UDP-N-acetyl-D-glucosamine:N-acetylmuramoyl-L-alanyl-D-glutamyl-meso-2,6-diaminopimelyl-D-alanyl-D-alanine-diphosphoundecaprenol 4-beta-N-acetylglucosaminlytransferase activity"/>
    <property type="evidence" value="ECO:0007669"/>
    <property type="project" value="RHEA"/>
</dbReference>
<dbReference type="GO" id="GO:0050511">
    <property type="term" value="F:undecaprenyldiphospho-muramoylpentapeptide beta-N-acetylglucosaminyltransferase activity"/>
    <property type="evidence" value="ECO:0007669"/>
    <property type="project" value="UniProtKB-UniRule"/>
</dbReference>
<dbReference type="GO" id="GO:0005975">
    <property type="term" value="P:carbohydrate metabolic process"/>
    <property type="evidence" value="ECO:0007669"/>
    <property type="project" value="InterPro"/>
</dbReference>
<dbReference type="GO" id="GO:0051301">
    <property type="term" value="P:cell division"/>
    <property type="evidence" value="ECO:0007669"/>
    <property type="project" value="UniProtKB-KW"/>
</dbReference>
<dbReference type="GO" id="GO:0071555">
    <property type="term" value="P:cell wall organization"/>
    <property type="evidence" value="ECO:0007669"/>
    <property type="project" value="UniProtKB-KW"/>
</dbReference>
<dbReference type="GO" id="GO:0030259">
    <property type="term" value="P:lipid glycosylation"/>
    <property type="evidence" value="ECO:0007669"/>
    <property type="project" value="UniProtKB-UniRule"/>
</dbReference>
<dbReference type="GO" id="GO:0009252">
    <property type="term" value="P:peptidoglycan biosynthetic process"/>
    <property type="evidence" value="ECO:0007669"/>
    <property type="project" value="UniProtKB-UniRule"/>
</dbReference>
<dbReference type="GO" id="GO:0008360">
    <property type="term" value="P:regulation of cell shape"/>
    <property type="evidence" value="ECO:0007669"/>
    <property type="project" value="UniProtKB-KW"/>
</dbReference>
<dbReference type="CDD" id="cd03785">
    <property type="entry name" value="GT28_MurG"/>
    <property type="match status" value="1"/>
</dbReference>
<dbReference type="Gene3D" id="3.40.50.2000">
    <property type="entry name" value="Glycogen Phosphorylase B"/>
    <property type="match status" value="2"/>
</dbReference>
<dbReference type="HAMAP" id="MF_00033">
    <property type="entry name" value="MurG"/>
    <property type="match status" value="1"/>
</dbReference>
<dbReference type="InterPro" id="IPR006009">
    <property type="entry name" value="GlcNAc_MurG"/>
</dbReference>
<dbReference type="InterPro" id="IPR007235">
    <property type="entry name" value="Glyco_trans_28_C"/>
</dbReference>
<dbReference type="InterPro" id="IPR004276">
    <property type="entry name" value="GlycoTrans_28_N"/>
</dbReference>
<dbReference type="NCBIfam" id="TIGR01133">
    <property type="entry name" value="murG"/>
    <property type="match status" value="1"/>
</dbReference>
<dbReference type="PANTHER" id="PTHR21015:SF22">
    <property type="entry name" value="GLYCOSYLTRANSFERASE"/>
    <property type="match status" value="1"/>
</dbReference>
<dbReference type="PANTHER" id="PTHR21015">
    <property type="entry name" value="UDP-N-ACETYLGLUCOSAMINE--N-ACETYLMURAMYL-(PENTAPEPTIDE) PYROPHOSPHORYL-UNDECAPRENOL N-ACETYLGLUCOSAMINE TRANSFERASE 1"/>
    <property type="match status" value="1"/>
</dbReference>
<dbReference type="Pfam" id="PF04101">
    <property type="entry name" value="Glyco_tran_28_C"/>
    <property type="match status" value="1"/>
</dbReference>
<dbReference type="Pfam" id="PF03033">
    <property type="entry name" value="Glyco_transf_28"/>
    <property type="match status" value="1"/>
</dbReference>
<dbReference type="SUPFAM" id="SSF53756">
    <property type="entry name" value="UDP-Glycosyltransferase/glycogen phosphorylase"/>
    <property type="match status" value="1"/>
</dbReference>
<accession>Q3BXF2</accession>
<organism>
    <name type="scientific">Xanthomonas euvesicatoria pv. vesicatoria (strain 85-10)</name>
    <name type="common">Xanthomonas campestris pv. vesicatoria</name>
    <dbReference type="NCBI Taxonomy" id="316273"/>
    <lineage>
        <taxon>Bacteria</taxon>
        <taxon>Pseudomonadati</taxon>
        <taxon>Pseudomonadota</taxon>
        <taxon>Gammaproteobacteria</taxon>
        <taxon>Lysobacterales</taxon>
        <taxon>Lysobacteraceae</taxon>
        <taxon>Xanthomonas</taxon>
    </lineage>
</organism>
<sequence>MSVSAHAAQKMPAPSSAMMRPVMILAGGTGGHIFPGLAVAKVLRARGVPVTWLGADDAMETRLVPQHDIPIDTLAISGLRGKGVVKLLGAPVRVMRAVRAAGFVLRKRRPRAVISFGGFAAGPGGLAARLLGAPLLVHEQNRAPGMTNKVLSRFARRVLTGFPGSFAGEEAVGNPVRAEIAALPAPADRLVGRTGPVRVLVLGGSQGARALNQAVPTALAALGHPEVELRHQCGEKLRAEAEAAYLQAGVNASVEPFIADMAAAYAWADLVVCRAGASTLAELCAAGVGSVLVPFAAAVDDHQTRNAEYLVGADAAVLLKQDDSLAVRLQQVLQTLLADPTRRLSMANAARTLAKPDAAERIADIILQEAGSGDGQPPAVQERAGLGIRNKQTHKQGSMQTSVNGDRSAQLIATNPQSRLPNPGASAGGAP</sequence>
<protein>
    <recommendedName>
        <fullName evidence="1">UDP-N-acetylglucosamine--N-acetylmuramyl-(pentapeptide) pyrophosphoryl-undecaprenol N-acetylglucosamine transferase</fullName>
        <ecNumber evidence="1">2.4.1.227</ecNumber>
    </recommendedName>
    <alternativeName>
        <fullName evidence="1">Undecaprenyl-PP-MurNAc-pentapeptide-UDPGlcNAc GlcNAc transferase</fullName>
    </alternativeName>
</protein>
<evidence type="ECO:0000255" key="1">
    <source>
        <dbReference type="HAMAP-Rule" id="MF_00033"/>
    </source>
</evidence>
<evidence type="ECO:0000256" key="2">
    <source>
        <dbReference type="SAM" id="MobiDB-lite"/>
    </source>
</evidence>
<comment type="function">
    <text evidence="1">Cell wall formation. Catalyzes the transfer of a GlcNAc subunit on undecaprenyl-pyrophosphoryl-MurNAc-pentapeptide (lipid intermediate I) to form undecaprenyl-pyrophosphoryl-MurNAc-(pentapeptide)GlcNAc (lipid intermediate II).</text>
</comment>
<comment type="catalytic activity">
    <reaction evidence="1">
        <text>di-trans,octa-cis-undecaprenyl diphospho-N-acetyl-alpha-D-muramoyl-L-alanyl-D-glutamyl-meso-2,6-diaminopimeloyl-D-alanyl-D-alanine + UDP-N-acetyl-alpha-D-glucosamine = di-trans,octa-cis-undecaprenyl diphospho-[N-acetyl-alpha-D-glucosaminyl-(1-&gt;4)]-N-acetyl-alpha-D-muramoyl-L-alanyl-D-glutamyl-meso-2,6-diaminopimeloyl-D-alanyl-D-alanine + UDP + H(+)</text>
        <dbReference type="Rhea" id="RHEA:31227"/>
        <dbReference type="ChEBI" id="CHEBI:15378"/>
        <dbReference type="ChEBI" id="CHEBI:57705"/>
        <dbReference type="ChEBI" id="CHEBI:58223"/>
        <dbReference type="ChEBI" id="CHEBI:61387"/>
        <dbReference type="ChEBI" id="CHEBI:61388"/>
        <dbReference type="EC" id="2.4.1.227"/>
    </reaction>
</comment>
<comment type="pathway">
    <text evidence="1">Cell wall biogenesis; peptidoglycan biosynthesis.</text>
</comment>
<comment type="subcellular location">
    <subcellularLocation>
        <location evidence="1">Cell inner membrane</location>
        <topology evidence="1">Peripheral membrane protein</topology>
        <orientation evidence="1">Cytoplasmic side</orientation>
    </subcellularLocation>
</comment>
<comment type="similarity">
    <text evidence="1">Belongs to the glycosyltransferase 28 family. MurG subfamily.</text>
</comment>
<reference key="1">
    <citation type="journal article" date="2005" name="J. Bacteriol.">
        <title>Insights into genome plasticity and pathogenicity of the plant pathogenic Bacterium Xanthomonas campestris pv. vesicatoria revealed by the complete genome sequence.</title>
        <authorList>
            <person name="Thieme F."/>
            <person name="Koebnik R."/>
            <person name="Bekel T."/>
            <person name="Berger C."/>
            <person name="Boch J."/>
            <person name="Buettner D."/>
            <person name="Caldana C."/>
            <person name="Gaigalat L."/>
            <person name="Goesmann A."/>
            <person name="Kay S."/>
            <person name="Kirchner O."/>
            <person name="Lanz C."/>
            <person name="Linke B."/>
            <person name="McHardy A.C."/>
            <person name="Meyer F."/>
            <person name="Mittenhuber G."/>
            <person name="Nies D.H."/>
            <person name="Niesbach-Kloesgen U."/>
            <person name="Patschkowski T."/>
            <person name="Rueckert C."/>
            <person name="Rupp O."/>
            <person name="Schneiker S."/>
            <person name="Schuster S.C."/>
            <person name="Vorhoelter F.J."/>
            <person name="Weber E."/>
            <person name="Puehler A."/>
            <person name="Bonas U."/>
            <person name="Bartels D."/>
            <person name="Kaiser O."/>
        </authorList>
    </citation>
    <scope>NUCLEOTIDE SEQUENCE [LARGE SCALE GENOMIC DNA]</scope>
    <source>
        <strain>85-10</strain>
    </source>
</reference>
<gene>
    <name evidence="1" type="primary">murG</name>
    <name type="ordered locus">XCV0830</name>
</gene>